<comment type="function">
    <text evidence="1">Zinc phosphodiesterase, which displays some tRNA 3'-processing endonuclease activity. Probably involved in tRNA maturation, by removing a 3'-trailer from precursor tRNA.</text>
</comment>
<comment type="catalytic activity">
    <reaction evidence="1">
        <text>Endonucleolytic cleavage of RNA, removing extra 3' nucleotides from tRNA precursor, generating 3' termini of tRNAs. A 3'-hydroxy group is left at the tRNA terminus and a 5'-phosphoryl group is left at the trailer molecule.</text>
        <dbReference type="EC" id="3.1.26.11"/>
    </reaction>
</comment>
<comment type="cofactor">
    <cofactor evidence="1">
        <name>Zn(2+)</name>
        <dbReference type="ChEBI" id="CHEBI:29105"/>
    </cofactor>
    <text evidence="1">Binds 2 Zn(2+) ions.</text>
</comment>
<comment type="subunit">
    <text evidence="1">Homodimer.</text>
</comment>
<comment type="similarity">
    <text evidence="1">Belongs to the RNase Z family.</text>
</comment>
<dbReference type="EC" id="3.1.26.11" evidence="1"/>
<dbReference type="EMBL" id="BX548174">
    <property type="protein sequence ID" value="CAE19808.1"/>
    <property type="molecule type" value="Genomic_DNA"/>
</dbReference>
<dbReference type="RefSeq" id="WP_011132983.1">
    <property type="nucleotide sequence ID" value="NC_005072.1"/>
</dbReference>
<dbReference type="SMR" id="Q7V0B9"/>
<dbReference type="STRING" id="59919.PMM1349"/>
<dbReference type="KEGG" id="pmm:PMM1349"/>
<dbReference type="eggNOG" id="COG1234">
    <property type="taxonomic scope" value="Bacteria"/>
</dbReference>
<dbReference type="HOGENOM" id="CLU_031317_2_0_3"/>
<dbReference type="OrthoDB" id="9800940at2"/>
<dbReference type="Proteomes" id="UP000001026">
    <property type="component" value="Chromosome"/>
</dbReference>
<dbReference type="GO" id="GO:0042781">
    <property type="term" value="F:3'-tRNA processing endoribonuclease activity"/>
    <property type="evidence" value="ECO:0007669"/>
    <property type="project" value="UniProtKB-UniRule"/>
</dbReference>
<dbReference type="GO" id="GO:0008270">
    <property type="term" value="F:zinc ion binding"/>
    <property type="evidence" value="ECO:0007669"/>
    <property type="project" value="UniProtKB-UniRule"/>
</dbReference>
<dbReference type="CDD" id="cd07717">
    <property type="entry name" value="RNaseZ_ZiPD-like_MBL-fold"/>
    <property type="match status" value="1"/>
</dbReference>
<dbReference type="FunFam" id="3.60.15.10:FF:000002">
    <property type="entry name" value="Ribonuclease Z"/>
    <property type="match status" value="1"/>
</dbReference>
<dbReference type="Gene3D" id="3.60.15.10">
    <property type="entry name" value="Ribonuclease Z/Hydroxyacylglutathione hydrolase-like"/>
    <property type="match status" value="1"/>
</dbReference>
<dbReference type="HAMAP" id="MF_01818">
    <property type="entry name" value="RNase_Z_BN"/>
    <property type="match status" value="1"/>
</dbReference>
<dbReference type="InterPro" id="IPR001279">
    <property type="entry name" value="Metallo-B-lactamas"/>
</dbReference>
<dbReference type="InterPro" id="IPR036866">
    <property type="entry name" value="RibonucZ/Hydroxyglut_hydro"/>
</dbReference>
<dbReference type="InterPro" id="IPR013471">
    <property type="entry name" value="RNase_Z/BN"/>
</dbReference>
<dbReference type="NCBIfam" id="NF000801">
    <property type="entry name" value="PRK00055.1-3"/>
    <property type="match status" value="1"/>
</dbReference>
<dbReference type="NCBIfam" id="TIGR02651">
    <property type="entry name" value="RNase_Z"/>
    <property type="match status" value="1"/>
</dbReference>
<dbReference type="PANTHER" id="PTHR46018">
    <property type="entry name" value="ZINC PHOSPHODIESTERASE ELAC PROTEIN 1"/>
    <property type="match status" value="1"/>
</dbReference>
<dbReference type="PANTHER" id="PTHR46018:SF2">
    <property type="entry name" value="ZINC PHOSPHODIESTERASE ELAC PROTEIN 1"/>
    <property type="match status" value="1"/>
</dbReference>
<dbReference type="Pfam" id="PF00753">
    <property type="entry name" value="Lactamase_B"/>
    <property type="match status" value="1"/>
</dbReference>
<dbReference type="SUPFAM" id="SSF56281">
    <property type="entry name" value="Metallo-hydrolase/oxidoreductase"/>
    <property type="match status" value="1"/>
</dbReference>
<feature type="chain" id="PRO_0000155886" description="Ribonuclease Z">
    <location>
        <begin position="1"/>
        <end position="312"/>
    </location>
</feature>
<feature type="active site" description="Proton acceptor" evidence="1">
    <location>
        <position position="66"/>
    </location>
</feature>
<feature type="binding site" evidence="1">
    <location>
        <position position="62"/>
    </location>
    <ligand>
        <name>Zn(2+)</name>
        <dbReference type="ChEBI" id="CHEBI:29105"/>
        <label>1</label>
        <note>catalytic</note>
    </ligand>
</feature>
<feature type="binding site" evidence="1">
    <location>
        <position position="64"/>
    </location>
    <ligand>
        <name>Zn(2+)</name>
        <dbReference type="ChEBI" id="CHEBI:29105"/>
        <label>1</label>
        <note>catalytic</note>
    </ligand>
</feature>
<feature type="binding site" evidence="1">
    <location>
        <position position="66"/>
    </location>
    <ligand>
        <name>Zn(2+)</name>
        <dbReference type="ChEBI" id="CHEBI:29105"/>
        <label>2</label>
        <note>catalytic</note>
    </ligand>
</feature>
<feature type="binding site" evidence="1">
    <location>
        <position position="67"/>
    </location>
    <ligand>
        <name>Zn(2+)</name>
        <dbReference type="ChEBI" id="CHEBI:29105"/>
        <label>2</label>
        <note>catalytic</note>
    </ligand>
</feature>
<feature type="binding site" evidence="1">
    <location>
        <position position="144"/>
    </location>
    <ligand>
        <name>Zn(2+)</name>
        <dbReference type="ChEBI" id="CHEBI:29105"/>
        <label>1</label>
        <note>catalytic</note>
    </ligand>
</feature>
<feature type="binding site" evidence="1">
    <location>
        <position position="215"/>
    </location>
    <ligand>
        <name>Zn(2+)</name>
        <dbReference type="ChEBI" id="CHEBI:29105"/>
        <label>1</label>
        <note>catalytic</note>
    </ligand>
</feature>
<feature type="binding site" evidence="1">
    <location>
        <position position="215"/>
    </location>
    <ligand>
        <name>Zn(2+)</name>
        <dbReference type="ChEBI" id="CHEBI:29105"/>
        <label>2</label>
        <note>catalytic</note>
    </ligand>
</feature>
<feature type="binding site" evidence="1">
    <location>
        <position position="273"/>
    </location>
    <ligand>
        <name>Zn(2+)</name>
        <dbReference type="ChEBI" id="CHEBI:29105"/>
        <label>2</label>
        <note>catalytic</note>
    </ligand>
</feature>
<gene>
    <name evidence="1" type="primary">rnz</name>
    <name type="ordered locus">PMM1349</name>
</gene>
<sequence>MNITFLGTSSGVPTLTRNVSSLALKLSQTAEVWLFDCGEGTQHQLMKSNIKSSQIKKIFITHMHGDHIYGLPGLLATLGLSGNSNGIEIYGPSELKSFVTSALESSFCKLSFPLRFRAVEDFASLNKILFENDKLKVHCACLKHRLPAYGYRVSEKDKPGVFDIKKAEDSNIPPGPIYSELQAGKTVQLKDGRSFNGQDFCGPPRKGESFVYCTDTVFSKSAVNLSKNADLLVHESTFSKEDEKMAYEKLHSTTIMAAKTALLSNVKKLIITHLSPRYTQRSSIKPSDLLKEAQKIFPNTYLAKDFLTAEIK</sequence>
<proteinExistence type="inferred from homology"/>
<organism>
    <name type="scientific">Prochlorococcus marinus subsp. pastoris (strain CCMP1986 / NIES-2087 / MED4)</name>
    <dbReference type="NCBI Taxonomy" id="59919"/>
    <lineage>
        <taxon>Bacteria</taxon>
        <taxon>Bacillati</taxon>
        <taxon>Cyanobacteriota</taxon>
        <taxon>Cyanophyceae</taxon>
        <taxon>Synechococcales</taxon>
        <taxon>Prochlorococcaceae</taxon>
        <taxon>Prochlorococcus</taxon>
    </lineage>
</organism>
<keyword id="KW-0255">Endonuclease</keyword>
<keyword id="KW-0378">Hydrolase</keyword>
<keyword id="KW-0479">Metal-binding</keyword>
<keyword id="KW-0540">Nuclease</keyword>
<keyword id="KW-0819">tRNA processing</keyword>
<keyword id="KW-0862">Zinc</keyword>
<evidence type="ECO:0000255" key="1">
    <source>
        <dbReference type="HAMAP-Rule" id="MF_01818"/>
    </source>
</evidence>
<name>RNZ_PROMP</name>
<protein>
    <recommendedName>
        <fullName evidence="1">Ribonuclease Z</fullName>
        <shortName evidence="1">RNase Z</shortName>
        <ecNumber evidence="1">3.1.26.11</ecNumber>
    </recommendedName>
    <alternativeName>
        <fullName evidence="1">tRNA 3 endonuclease</fullName>
    </alternativeName>
    <alternativeName>
        <fullName evidence="1">tRNase Z</fullName>
    </alternativeName>
</protein>
<accession>Q7V0B9</accession>
<reference key="1">
    <citation type="journal article" date="2003" name="Nature">
        <title>Genome divergence in two Prochlorococcus ecotypes reflects oceanic niche differentiation.</title>
        <authorList>
            <person name="Rocap G."/>
            <person name="Larimer F.W."/>
            <person name="Lamerdin J.E."/>
            <person name="Malfatti S."/>
            <person name="Chain P."/>
            <person name="Ahlgren N.A."/>
            <person name="Arellano A."/>
            <person name="Coleman M."/>
            <person name="Hauser L."/>
            <person name="Hess W.R."/>
            <person name="Johnson Z.I."/>
            <person name="Land M.L."/>
            <person name="Lindell D."/>
            <person name="Post A.F."/>
            <person name="Regala W."/>
            <person name="Shah M."/>
            <person name="Shaw S.L."/>
            <person name="Steglich C."/>
            <person name="Sullivan M.B."/>
            <person name="Ting C.S."/>
            <person name="Tolonen A."/>
            <person name="Webb E.A."/>
            <person name="Zinser E.R."/>
            <person name="Chisholm S.W."/>
        </authorList>
    </citation>
    <scope>NUCLEOTIDE SEQUENCE [LARGE SCALE GENOMIC DNA]</scope>
    <source>
        <strain>CCMP1986 / NIES-2087 / MED4</strain>
    </source>
</reference>